<keyword id="KW-0066">ATP synthesis</keyword>
<keyword id="KW-0067">ATP-binding</keyword>
<keyword id="KW-0997">Cell inner membrane</keyword>
<keyword id="KW-1003">Cell membrane</keyword>
<keyword id="KW-0139">CF(1)</keyword>
<keyword id="KW-0375">Hydrogen ion transport</keyword>
<keyword id="KW-0406">Ion transport</keyword>
<keyword id="KW-0472">Membrane</keyword>
<keyword id="KW-0547">Nucleotide-binding</keyword>
<keyword id="KW-1185">Reference proteome</keyword>
<keyword id="KW-1278">Translocase</keyword>
<keyword id="KW-0813">Transport</keyword>
<comment type="function">
    <text evidence="1">Produces ATP from ADP in the presence of a proton gradient across the membrane. The catalytic sites are hosted primarily by the beta subunits.</text>
</comment>
<comment type="catalytic activity">
    <reaction evidence="1">
        <text>ATP + H2O + 4 H(+)(in) = ADP + phosphate + 5 H(+)(out)</text>
        <dbReference type="Rhea" id="RHEA:57720"/>
        <dbReference type="ChEBI" id="CHEBI:15377"/>
        <dbReference type="ChEBI" id="CHEBI:15378"/>
        <dbReference type="ChEBI" id="CHEBI:30616"/>
        <dbReference type="ChEBI" id="CHEBI:43474"/>
        <dbReference type="ChEBI" id="CHEBI:456216"/>
        <dbReference type="EC" id="7.1.2.2"/>
    </reaction>
</comment>
<comment type="subunit">
    <text evidence="1">F-type ATPases have 2 components, CF(1) - the catalytic core - and CF(0) - the membrane proton channel. CF(1) has five subunits: alpha(3), beta(3), gamma(1), delta(1), epsilon(1). CF(0) has three main subunits: a(1), b(2) and c(9-12). The alpha and beta chains form an alternating ring which encloses part of the gamma chain. CF(1) is attached to CF(0) by a central stalk formed by the gamma and epsilon chains, while a peripheral stalk is formed by the delta and b chains.</text>
</comment>
<comment type="subcellular location">
    <subcellularLocation>
        <location evidence="1">Cell inner membrane</location>
        <topology evidence="1">Peripheral membrane protein</topology>
    </subcellularLocation>
</comment>
<comment type="similarity">
    <text evidence="1">Belongs to the ATPase alpha/beta chains family.</text>
</comment>
<reference key="1">
    <citation type="submission" date="2005-08" db="EMBL/GenBank/DDBJ databases">
        <title>Complete sequence of chromosome 1 of Nitrosospira multiformis ATCC 25196.</title>
        <authorList>
            <person name="Copeland A."/>
            <person name="Lucas S."/>
            <person name="Lapidus A."/>
            <person name="Barry K."/>
            <person name="Detter J.C."/>
            <person name="Glavina T."/>
            <person name="Hammon N."/>
            <person name="Israni S."/>
            <person name="Pitluck S."/>
            <person name="Chain P."/>
            <person name="Malfatti S."/>
            <person name="Shin M."/>
            <person name="Vergez L."/>
            <person name="Schmutz J."/>
            <person name="Larimer F."/>
            <person name="Land M."/>
            <person name="Hauser L."/>
            <person name="Kyrpides N."/>
            <person name="Lykidis A."/>
            <person name="Richardson P."/>
        </authorList>
    </citation>
    <scope>NUCLEOTIDE SEQUENCE [LARGE SCALE GENOMIC DNA]</scope>
    <source>
        <strain>ATCC 25196 / NCIMB 11849 / C 71</strain>
    </source>
</reference>
<proteinExistence type="inferred from homology"/>
<gene>
    <name evidence="1" type="primary">atpD1</name>
    <name type="ordered locus">Nmul_A0310</name>
</gene>
<sequence length="459" mass="49865">MNQGKIVQCIGAVVDVEFAREEMPKVYDALVLEGSELTLEVQQQLGDGVVRTIALGSSEGLRRGMMVTNTGDQIRVPVGTKTLGRIMDVLGTPIDEMGPIGAEQNRSIHQKAPAFDELSASTELLETGIKVIDLVCPFAKGGKVGLFGGAGVGKTVNMMELIRNIAIEHSGYSVFAGVGERTREGNDFYHEMKDSNVLDKVALVYGQMNEPPGNRLRVALTGLTMAEHFRDEGRDVLLFVDNIYRFTLAGTEVSALLGRMPSAVGYQPTLAEEMGRLQERITSTKSGSITSIQAVYVPADDLTDPSPATTFGHLDATVVLSRDIASLGIYPAVDPLDSTSRQLDPLVVGEEHYSTARAVQQTLQRYKELRDIIAILGMDELSPEDKLAVARARKIQRFLSQPFNVAEVFTGAPGKYVPLKETIKGFKGIVSGEYDHLPEQAFYMVGGIDEAVEKAKTLQ</sequence>
<organism>
    <name type="scientific">Nitrosospira multiformis (strain ATCC 25196 / NCIMB 11849 / C 71)</name>
    <dbReference type="NCBI Taxonomy" id="323848"/>
    <lineage>
        <taxon>Bacteria</taxon>
        <taxon>Pseudomonadati</taxon>
        <taxon>Pseudomonadota</taxon>
        <taxon>Betaproteobacteria</taxon>
        <taxon>Nitrosomonadales</taxon>
        <taxon>Nitrosomonadaceae</taxon>
        <taxon>Nitrosospira</taxon>
    </lineage>
</organism>
<dbReference type="EC" id="7.1.2.2" evidence="1"/>
<dbReference type="EMBL" id="CP000103">
    <property type="protein sequence ID" value="ABB73618.1"/>
    <property type="molecule type" value="Genomic_DNA"/>
</dbReference>
<dbReference type="RefSeq" id="WP_011379672.1">
    <property type="nucleotide sequence ID" value="NC_007614.1"/>
</dbReference>
<dbReference type="SMR" id="Q2YCA3"/>
<dbReference type="STRING" id="323848.Nmul_A0310"/>
<dbReference type="KEGG" id="nmu:Nmul_A0310"/>
<dbReference type="eggNOG" id="COG0055">
    <property type="taxonomic scope" value="Bacteria"/>
</dbReference>
<dbReference type="HOGENOM" id="CLU_022398_0_2_4"/>
<dbReference type="OrthoDB" id="9801639at2"/>
<dbReference type="Proteomes" id="UP000002718">
    <property type="component" value="Chromosome"/>
</dbReference>
<dbReference type="GO" id="GO:0005886">
    <property type="term" value="C:plasma membrane"/>
    <property type="evidence" value="ECO:0007669"/>
    <property type="project" value="UniProtKB-SubCell"/>
</dbReference>
<dbReference type="GO" id="GO:0045259">
    <property type="term" value="C:proton-transporting ATP synthase complex"/>
    <property type="evidence" value="ECO:0007669"/>
    <property type="project" value="UniProtKB-KW"/>
</dbReference>
<dbReference type="GO" id="GO:0005524">
    <property type="term" value="F:ATP binding"/>
    <property type="evidence" value="ECO:0007669"/>
    <property type="project" value="UniProtKB-UniRule"/>
</dbReference>
<dbReference type="GO" id="GO:0016887">
    <property type="term" value="F:ATP hydrolysis activity"/>
    <property type="evidence" value="ECO:0007669"/>
    <property type="project" value="InterPro"/>
</dbReference>
<dbReference type="GO" id="GO:0046933">
    <property type="term" value="F:proton-transporting ATP synthase activity, rotational mechanism"/>
    <property type="evidence" value="ECO:0007669"/>
    <property type="project" value="UniProtKB-UniRule"/>
</dbReference>
<dbReference type="CDD" id="cd18110">
    <property type="entry name" value="ATP-synt_F1_beta_C"/>
    <property type="match status" value="1"/>
</dbReference>
<dbReference type="CDD" id="cd18115">
    <property type="entry name" value="ATP-synt_F1_beta_N"/>
    <property type="match status" value="1"/>
</dbReference>
<dbReference type="CDD" id="cd01133">
    <property type="entry name" value="F1-ATPase_beta_CD"/>
    <property type="match status" value="1"/>
</dbReference>
<dbReference type="FunFam" id="1.10.1140.10:FF:000001">
    <property type="entry name" value="ATP synthase subunit beta"/>
    <property type="match status" value="1"/>
</dbReference>
<dbReference type="FunFam" id="3.40.50.300:FF:000004">
    <property type="entry name" value="ATP synthase subunit beta"/>
    <property type="match status" value="1"/>
</dbReference>
<dbReference type="Gene3D" id="2.40.10.170">
    <property type="match status" value="1"/>
</dbReference>
<dbReference type="Gene3D" id="1.10.1140.10">
    <property type="entry name" value="Bovine Mitochondrial F1-atpase, Atp Synthase Beta Chain, Chain D, domain 3"/>
    <property type="match status" value="1"/>
</dbReference>
<dbReference type="Gene3D" id="3.40.50.300">
    <property type="entry name" value="P-loop containing nucleotide triphosphate hydrolases"/>
    <property type="match status" value="1"/>
</dbReference>
<dbReference type="HAMAP" id="MF_01347">
    <property type="entry name" value="ATP_synth_beta_bact"/>
    <property type="match status" value="1"/>
</dbReference>
<dbReference type="InterPro" id="IPR003593">
    <property type="entry name" value="AAA+_ATPase"/>
</dbReference>
<dbReference type="InterPro" id="IPR055190">
    <property type="entry name" value="ATP-synt_VA_C"/>
</dbReference>
<dbReference type="InterPro" id="IPR005722">
    <property type="entry name" value="ATP_synth_F1_bsu"/>
</dbReference>
<dbReference type="InterPro" id="IPR020003">
    <property type="entry name" value="ATPase_a/bsu_AS"/>
</dbReference>
<dbReference type="InterPro" id="IPR050053">
    <property type="entry name" value="ATPase_alpha/beta_chains"/>
</dbReference>
<dbReference type="InterPro" id="IPR004100">
    <property type="entry name" value="ATPase_F1/V1/A1_a/bsu_N"/>
</dbReference>
<dbReference type="InterPro" id="IPR036121">
    <property type="entry name" value="ATPase_F1/V1/A1_a/bsu_N_sf"/>
</dbReference>
<dbReference type="InterPro" id="IPR000194">
    <property type="entry name" value="ATPase_F1/V1/A1_a/bsu_nucl-bd"/>
</dbReference>
<dbReference type="InterPro" id="IPR024034">
    <property type="entry name" value="ATPase_F1/V1_b/a_C"/>
</dbReference>
<dbReference type="InterPro" id="IPR027417">
    <property type="entry name" value="P-loop_NTPase"/>
</dbReference>
<dbReference type="NCBIfam" id="TIGR01039">
    <property type="entry name" value="atpD"/>
    <property type="match status" value="1"/>
</dbReference>
<dbReference type="PANTHER" id="PTHR15184">
    <property type="entry name" value="ATP SYNTHASE"/>
    <property type="match status" value="1"/>
</dbReference>
<dbReference type="PANTHER" id="PTHR15184:SF71">
    <property type="entry name" value="ATP SYNTHASE SUBUNIT BETA, MITOCHONDRIAL"/>
    <property type="match status" value="1"/>
</dbReference>
<dbReference type="Pfam" id="PF00006">
    <property type="entry name" value="ATP-synt_ab"/>
    <property type="match status" value="1"/>
</dbReference>
<dbReference type="Pfam" id="PF02874">
    <property type="entry name" value="ATP-synt_ab_N"/>
    <property type="match status" value="1"/>
</dbReference>
<dbReference type="Pfam" id="PF22919">
    <property type="entry name" value="ATP-synt_VA_C"/>
    <property type="match status" value="1"/>
</dbReference>
<dbReference type="SMART" id="SM00382">
    <property type="entry name" value="AAA"/>
    <property type="match status" value="1"/>
</dbReference>
<dbReference type="SUPFAM" id="SSF47917">
    <property type="entry name" value="C-terminal domain of alpha and beta subunits of F1 ATP synthase"/>
    <property type="match status" value="1"/>
</dbReference>
<dbReference type="SUPFAM" id="SSF50615">
    <property type="entry name" value="N-terminal domain of alpha and beta subunits of F1 ATP synthase"/>
    <property type="match status" value="1"/>
</dbReference>
<dbReference type="SUPFAM" id="SSF52540">
    <property type="entry name" value="P-loop containing nucleoside triphosphate hydrolases"/>
    <property type="match status" value="1"/>
</dbReference>
<dbReference type="PROSITE" id="PS00152">
    <property type="entry name" value="ATPASE_ALPHA_BETA"/>
    <property type="match status" value="1"/>
</dbReference>
<accession>Q2YCA3</accession>
<name>ATPB1_NITMU</name>
<protein>
    <recommendedName>
        <fullName evidence="1">ATP synthase subunit beta 1</fullName>
        <ecNumber evidence="1">7.1.2.2</ecNumber>
    </recommendedName>
    <alternativeName>
        <fullName evidence="1">ATP synthase F1 sector subunit beta 1</fullName>
    </alternativeName>
    <alternativeName>
        <fullName evidence="1">F-ATPase subunit beta 1</fullName>
    </alternativeName>
</protein>
<feature type="chain" id="PRO_0000254319" description="ATP synthase subunit beta 1">
    <location>
        <begin position="1"/>
        <end position="459"/>
    </location>
</feature>
<feature type="binding site" evidence="1">
    <location>
        <begin position="148"/>
        <end position="155"/>
    </location>
    <ligand>
        <name>ATP</name>
        <dbReference type="ChEBI" id="CHEBI:30616"/>
    </ligand>
</feature>
<evidence type="ECO:0000255" key="1">
    <source>
        <dbReference type="HAMAP-Rule" id="MF_01347"/>
    </source>
</evidence>